<feature type="chain" id="PRO_0000220178" description="Alkanal monooxygenase beta chain">
    <location>
        <begin position="1"/>
        <end position="324"/>
    </location>
</feature>
<name>LUXB2_PHOLU</name>
<reference key="1">
    <citation type="journal article" date="1991" name="J. Bacteriol.">
        <title>Cloning and nucleotide sequences of lux genes and characterization of luciferase of Xenorhabdus luminescens from a human wound.</title>
        <authorList>
            <person name="Xi L."/>
            <person name="Cho K.W."/>
            <person name="Tu S.C."/>
        </authorList>
    </citation>
    <scope>NUCLEOTIDE SEQUENCE [GENOMIC DNA]</scope>
    <scope>FUNCTION</scope>
    <scope>CATALYTIC ACTIVITY</scope>
    <source>
        <strain>Hw</strain>
    </source>
</reference>
<proteinExistence type="evidence at protein level"/>
<keyword id="KW-0285">Flavoprotein</keyword>
<keyword id="KW-0288">FMN</keyword>
<keyword id="KW-0455">Luminescence</keyword>
<keyword id="KW-0503">Monooxygenase</keyword>
<keyword id="KW-0560">Oxidoreductase</keyword>
<keyword id="KW-0599">Photoprotein</keyword>
<organism>
    <name type="scientific">Photorhabdus luminescens</name>
    <name type="common">Xenorhabdus luminescens</name>
    <dbReference type="NCBI Taxonomy" id="29488"/>
    <lineage>
        <taxon>Bacteria</taxon>
        <taxon>Pseudomonadati</taxon>
        <taxon>Pseudomonadota</taxon>
        <taxon>Gammaproteobacteria</taxon>
        <taxon>Enterobacterales</taxon>
        <taxon>Morganellaceae</taxon>
        <taxon>Photorhabdus</taxon>
    </lineage>
</organism>
<protein>
    <recommendedName>
        <fullName>Alkanal monooxygenase beta chain</fullName>
        <ecNumber evidence="2">1.14.14.3</ecNumber>
    </recommendedName>
    <alternativeName>
        <fullName>Bacterial luciferase beta chain</fullName>
    </alternativeName>
</protein>
<dbReference type="EC" id="1.14.14.3" evidence="2"/>
<dbReference type="EMBL" id="M62917">
    <property type="protein sequence ID" value="AAA63566.1"/>
    <property type="molecule type" value="Genomic_DNA"/>
</dbReference>
<dbReference type="SMR" id="P23147"/>
<dbReference type="GO" id="GO:0005829">
    <property type="term" value="C:cytosol"/>
    <property type="evidence" value="ECO:0007669"/>
    <property type="project" value="TreeGrafter"/>
</dbReference>
<dbReference type="GO" id="GO:0047646">
    <property type="term" value="F:alkanal monooxygenase (FMN-linked) activity"/>
    <property type="evidence" value="ECO:0007669"/>
    <property type="project" value="UniProtKB-EC"/>
</dbReference>
<dbReference type="GO" id="GO:0008218">
    <property type="term" value="P:bioluminescence"/>
    <property type="evidence" value="ECO:0007669"/>
    <property type="project" value="UniProtKB-KW"/>
</dbReference>
<dbReference type="CDD" id="cd01096">
    <property type="entry name" value="Alkanal_monooxygenase"/>
    <property type="match status" value="1"/>
</dbReference>
<dbReference type="Gene3D" id="3.20.20.30">
    <property type="entry name" value="Luciferase-like domain"/>
    <property type="match status" value="2"/>
</dbReference>
<dbReference type="InterPro" id="IPR033924">
    <property type="entry name" value="Alkanal_monooxygenase"/>
</dbReference>
<dbReference type="InterPro" id="IPR050766">
    <property type="entry name" value="Bact_Lucif_Oxidored"/>
</dbReference>
<dbReference type="InterPro" id="IPR018235">
    <property type="entry name" value="Bacterial_luciferase_CS"/>
</dbReference>
<dbReference type="InterPro" id="IPR011251">
    <property type="entry name" value="Luciferase-like_dom"/>
</dbReference>
<dbReference type="InterPro" id="IPR036661">
    <property type="entry name" value="Luciferase-like_sf"/>
</dbReference>
<dbReference type="InterPro" id="IPR002103">
    <property type="entry name" value="Luciferase_bac/NFP"/>
</dbReference>
<dbReference type="PANTHER" id="PTHR30137:SF8">
    <property type="entry name" value="BLR5498 PROTEIN"/>
    <property type="match status" value="1"/>
</dbReference>
<dbReference type="PANTHER" id="PTHR30137">
    <property type="entry name" value="LUCIFERASE-LIKE MONOOXYGENASE"/>
    <property type="match status" value="1"/>
</dbReference>
<dbReference type="Pfam" id="PF00296">
    <property type="entry name" value="Bac_luciferase"/>
    <property type="match status" value="1"/>
</dbReference>
<dbReference type="PRINTS" id="PR00089">
    <property type="entry name" value="LUCIFERASE"/>
</dbReference>
<dbReference type="SUPFAM" id="SSF51679">
    <property type="entry name" value="Bacterial luciferase-like"/>
    <property type="match status" value="1"/>
</dbReference>
<dbReference type="PROSITE" id="PS00494">
    <property type="entry name" value="BACTERIAL_LUCIFERASE"/>
    <property type="match status" value="1"/>
</dbReference>
<accession>P23147</accession>
<gene>
    <name type="primary">luxB</name>
</gene>
<evidence type="ECO:0000250" key="1">
    <source>
        <dbReference type="UniProtKB" id="P07740"/>
    </source>
</evidence>
<evidence type="ECO:0000269" key="2">
    <source>
    </source>
</evidence>
<evidence type="ECO:0000305" key="3"/>
<sequence length="324" mass="37115">MKFGLFFLNFINSTTIQEQSIARMQEITEYVDKLNFEQILVCENHFSDNGVVGAPLTVSGFLLGLTEKIKIGSLNHVITTHHPVRIAEEACLLDQLSEGRFILGFSDCERKDEMPFFNRPEQYQQQLFEECYDIINDALTTGYCNPNGDFYNFPKISMNPHAYTQNGPRKYVTATSCHVVEWAAKKGIPLIFKWDDSNEVKHEYAKRYQAIAGEYGVDLAEIDHQLMILVNYSEDSEKAKEETRAFISDYILAMHPNENFEKKLEEIITENSVGDYMECTTAAKLAMEKCGTKGILLSFESMSDFTHQINAIDIVNDNIKKYHM</sequence>
<comment type="function">
    <text evidence="2">Light-emitting reaction in luminous bacteria. The specific role of the beta subunit is unknown, but it is absolutely required for bioluminescence activity.</text>
</comment>
<comment type="catalytic activity">
    <reaction evidence="2">
        <text>a long-chain fatty aldehyde + FMNH2 + O2 = a long-chain fatty acid + hnu + FMN + H2O + 2 H(+)</text>
        <dbReference type="Rhea" id="RHEA:17181"/>
        <dbReference type="ChEBI" id="CHEBI:15377"/>
        <dbReference type="ChEBI" id="CHEBI:15378"/>
        <dbReference type="ChEBI" id="CHEBI:15379"/>
        <dbReference type="ChEBI" id="CHEBI:17176"/>
        <dbReference type="ChEBI" id="CHEBI:30212"/>
        <dbReference type="ChEBI" id="CHEBI:57560"/>
        <dbReference type="ChEBI" id="CHEBI:57618"/>
        <dbReference type="ChEBI" id="CHEBI:58210"/>
        <dbReference type="EC" id="1.14.14.3"/>
    </reaction>
</comment>
<comment type="subunit">
    <text evidence="1">Heterodimer of an alpha and a beta chain.</text>
</comment>
<comment type="similarity">
    <text evidence="3">Belongs to the bacterial luciferase oxidoreductase family.</text>
</comment>